<feature type="chain" id="PRO_1000213115" description="Urease accessory protein UreE">
    <location>
        <begin position="1"/>
        <end position="165"/>
    </location>
</feature>
<organism>
    <name type="scientific">Micrococcus luteus (strain ATCC 4698 / DSM 20030 / JCM 1464 / CCM 169 / CCUG 5858 / IAM 1056 / NBRC 3333 / NCIMB 9278 / NCTC 2665 / VKM Ac-2230)</name>
    <name type="common">Micrococcus lysodeikticus</name>
    <dbReference type="NCBI Taxonomy" id="465515"/>
    <lineage>
        <taxon>Bacteria</taxon>
        <taxon>Bacillati</taxon>
        <taxon>Actinomycetota</taxon>
        <taxon>Actinomycetes</taxon>
        <taxon>Micrococcales</taxon>
        <taxon>Micrococcaceae</taxon>
        <taxon>Micrococcus</taxon>
    </lineage>
</organism>
<proteinExistence type="inferred from homology"/>
<accession>C5C8U4</accession>
<sequence length="165" mass="18469">MIVTEILGNVHDDAGAALVGDRHREQVHLEGSALVKRIQRLRTDHGNEYGLRLPAGSPDLRDGDILTVDDDDEGERGNAVIVRVLSTDVLVISARSLREMAFVAHSLGNRHLPAQFFDADGPFGRDAMVVQHDHTVEDFLRAHDVPHERQERVMDVPFRHAEHTH</sequence>
<protein>
    <recommendedName>
        <fullName evidence="1">Urease accessory protein UreE</fullName>
    </recommendedName>
</protein>
<name>UREE_MICLC</name>
<evidence type="ECO:0000255" key="1">
    <source>
        <dbReference type="HAMAP-Rule" id="MF_00822"/>
    </source>
</evidence>
<gene>
    <name evidence="1" type="primary">ureE</name>
    <name type="ordered locus">Mlut_03450</name>
</gene>
<comment type="function">
    <text evidence="1">Involved in urease metallocenter assembly. Binds nickel. Probably functions as a nickel donor during metallocenter assembly.</text>
</comment>
<comment type="subcellular location">
    <subcellularLocation>
        <location evidence="1">Cytoplasm</location>
    </subcellularLocation>
</comment>
<comment type="similarity">
    <text evidence="1">Belongs to the UreE family.</text>
</comment>
<keyword id="KW-0143">Chaperone</keyword>
<keyword id="KW-0963">Cytoplasm</keyword>
<keyword id="KW-0533">Nickel</keyword>
<keyword id="KW-1185">Reference proteome</keyword>
<dbReference type="EMBL" id="CP001628">
    <property type="protein sequence ID" value="ACS29896.1"/>
    <property type="molecule type" value="Genomic_DNA"/>
</dbReference>
<dbReference type="RefSeq" id="WP_010079476.1">
    <property type="nucleotide sequence ID" value="NC_012803.1"/>
</dbReference>
<dbReference type="SMR" id="C5C8U4"/>
<dbReference type="STRING" id="465515.Mlut_03450"/>
<dbReference type="EnsemblBacteria" id="ACS29896">
    <property type="protein sequence ID" value="ACS29896"/>
    <property type="gene ID" value="Mlut_03450"/>
</dbReference>
<dbReference type="GeneID" id="93344524"/>
<dbReference type="KEGG" id="mlu:Mlut_03450"/>
<dbReference type="PATRIC" id="fig|465515.4.peg.325"/>
<dbReference type="eggNOG" id="COG2371">
    <property type="taxonomic scope" value="Bacteria"/>
</dbReference>
<dbReference type="HOGENOM" id="CLU_093757_3_1_11"/>
<dbReference type="Proteomes" id="UP000000738">
    <property type="component" value="Chromosome"/>
</dbReference>
<dbReference type="GO" id="GO:0005737">
    <property type="term" value="C:cytoplasm"/>
    <property type="evidence" value="ECO:0007669"/>
    <property type="project" value="UniProtKB-SubCell"/>
</dbReference>
<dbReference type="GO" id="GO:0016151">
    <property type="term" value="F:nickel cation binding"/>
    <property type="evidence" value="ECO:0007669"/>
    <property type="project" value="UniProtKB-UniRule"/>
</dbReference>
<dbReference type="GO" id="GO:0051082">
    <property type="term" value="F:unfolded protein binding"/>
    <property type="evidence" value="ECO:0007669"/>
    <property type="project" value="UniProtKB-UniRule"/>
</dbReference>
<dbReference type="GO" id="GO:0006457">
    <property type="term" value="P:protein folding"/>
    <property type="evidence" value="ECO:0007669"/>
    <property type="project" value="InterPro"/>
</dbReference>
<dbReference type="GO" id="GO:0065003">
    <property type="term" value="P:protein-containing complex assembly"/>
    <property type="evidence" value="ECO:0007669"/>
    <property type="project" value="InterPro"/>
</dbReference>
<dbReference type="GO" id="GO:0019627">
    <property type="term" value="P:urea metabolic process"/>
    <property type="evidence" value="ECO:0007669"/>
    <property type="project" value="InterPro"/>
</dbReference>
<dbReference type="CDD" id="cd00571">
    <property type="entry name" value="UreE"/>
    <property type="match status" value="1"/>
</dbReference>
<dbReference type="Gene3D" id="2.60.260.20">
    <property type="entry name" value="Urease metallochaperone UreE, N-terminal domain"/>
    <property type="match status" value="1"/>
</dbReference>
<dbReference type="Gene3D" id="3.30.70.790">
    <property type="entry name" value="UreE, C-terminal domain"/>
    <property type="match status" value="1"/>
</dbReference>
<dbReference type="HAMAP" id="MF_00822">
    <property type="entry name" value="UreE"/>
    <property type="match status" value="1"/>
</dbReference>
<dbReference type="InterPro" id="IPR012406">
    <property type="entry name" value="UreE"/>
</dbReference>
<dbReference type="InterPro" id="IPR007864">
    <property type="entry name" value="UreE_C_dom"/>
</dbReference>
<dbReference type="InterPro" id="IPR004029">
    <property type="entry name" value="UreE_N"/>
</dbReference>
<dbReference type="InterPro" id="IPR036118">
    <property type="entry name" value="UreE_N_sf"/>
</dbReference>
<dbReference type="NCBIfam" id="NF009757">
    <property type="entry name" value="PRK13261.2-3"/>
    <property type="match status" value="1"/>
</dbReference>
<dbReference type="Pfam" id="PF05194">
    <property type="entry name" value="UreE_C"/>
    <property type="match status" value="1"/>
</dbReference>
<dbReference type="Pfam" id="PF02814">
    <property type="entry name" value="UreE_N"/>
    <property type="match status" value="1"/>
</dbReference>
<dbReference type="PIRSF" id="PIRSF036402">
    <property type="entry name" value="Ureas_acces_UreE"/>
    <property type="match status" value="1"/>
</dbReference>
<dbReference type="SMART" id="SM00988">
    <property type="entry name" value="UreE_N"/>
    <property type="match status" value="1"/>
</dbReference>
<dbReference type="SUPFAM" id="SSF69737">
    <property type="entry name" value="Urease metallochaperone UreE, C-terminal domain"/>
    <property type="match status" value="1"/>
</dbReference>
<dbReference type="SUPFAM" id="SSF69287">
    <property type="entry name" value="Urease metallochaperone UreE, N-terminal domain"/>
    <property type="match status" value="1"/>
</dbReference>
<reference key="1">
    <citation type="journal article" date="2010" name="J. Bacteriol.">
        <title>Genome sequence of the Fleming strain of Micrococcus luteus, a simple free-living actinobacterium.</title>
        <authorList>
            <person name="Young M."/>
            <person name="Artsatbanov V."/>
            <person name="Beller H.R."/>
            <person name="Chandra G."/>
            <person name="Chater K.F."/>
            <person name="Dover L.G."/>
            <person name="Goh E.B."/>
            <person name="Kahan T."/>
            <person name="Kaprelyants A.S."/>
            <person name="Kyrpides N."/>
            <person name="Lapidus A."/>
            <person name="Lowry S.R."/>
            <person name="Lykidis A."/>
            <person name="Mahillon J."/>
            <person name="Markowitz V."/>
            <person name="Mavromatis K."/>
            <person name="Mukamolova G.V."/>
            <person name="Oren A."/>
            <person name="Rokem J.S."/>
            <person name="Smith M.C."/>
            <person name="Young D.I."/>
            <person name="Greenblatt C.L."/>
        </authorList>
    </citation>
    <scope>NUCLEOTIDE SEQUENCE [LARGE SCALE GENOMIC DNA]</scope>
    <source>
        <strain>ATCC 4698 / DSM 20030 / JCM 1464 / CCM 169 / CCUG 5858 / IAM 1056 / NBRC 3333 / NCIMB 9278 / NCTC 2665 / VKM Ac-2230</strain>
    </source>
</reference>